<sequence>MTDAPAHTRERVTISEVARVAGVSKATVSRYIGGDRQLLAEATAKRLEEVIERLGYRPNQMARGLKRGQTRLIGMLVADILNPYSVAVMHGVETACRQHGYSLVVCNTNRDDEQERHHLVALQSYNVEGLIVNTLGHHPGELLNLQRDIPMVLVDRQLPELNVDLVGLDNADAVEQALDHLQAQGYRDILAVSEPLDGTSSRLERVQAFGASISRRPGMRQQVLEIGAGLQGQLASFLAHSGHGPQAIFTFNGVATLAVTRALLEAGRNLVADVGLIALDDLDWYPLVGKGITALAQPTERIGVAAFESLLGRLRGDSGAARRIDFKANLIIRGSTQPQ</sequence>
<dbReference type="EMBL" id="AE015451">
    <property type="protein sequence ID" value="AAN68984.1"/>
    <property type="molecule type" value="Genomic_DNA"/>
</dbReference>
<dbReference type="RefSeq" id="NP_745520.1">
    <property type="nucleotide sequence ID" value="NC_002947.4"/>
</dbReference>
<dbReference type="RefSeq" id="WP_010954253.1">
    <property type="nucleotide sequence ID" value="NZ_CP169744.1"/>
</dbReference>
<dbReference type="SMR" id="Q88HH7"/>
<dbReference type="STRING" id="160488.PP_3380"/>
<dbReference type="PaxDb" id="160488-PP_3380"/>
<dbReference type="GeneID" id="83679912"/>
<dbReference type="KEGG" id="ppu:PP_3380"/>
<dbReference type="PATRIC" id="fig|160488.4.peg.3593"/>
<dbReference type="eggNOG" id="COG1609">
    <property type="taxonomic scope" value="Bacteria"/>
</dbReference>
<dbReference type="HOGENOM" id="CLU_037628_6_0_6"/>
<dbReference type="OrthoDB" id="5672046at2"/>
<dbReference type="PhylomeDB" id="Q88HH7"/>
<dbReference type="BioCyc" id="PPUT160488:G1G01-3611-MONOMER"/>
<dbReference type="Proteomes" id="UP000000556">
    <property type="component" value="Chromosome"/>
</dbReference>
<dbReference type="CollecTF" id="EXPREG_000011c0"/>
<dbReference type="GO" id="GO:0032993">
    <property type="term" value="C:protein-DNA complex"/>
    <property type="evidence" value="ECO:0000353"/>
    <property type="project" value="CollecTF"/>
</dbReference>
<dbReference type="GO" id="GO:0001217">
    <property type="term" value="F:DNA-binding transcription repressor activity"/>
    <property type="evidence" value="ECO:0000353"/>
    <property type="project" value="CollecTF"/>
</dbReference>
<dbReference type="GO" id="GO:0042802">
    <property type="term" value="F:identical protein binding"/>
    <property type="evidence" value="ECO:0000353"/>
    <property type="project" value="IntAct"/>
</dbReference>
<dbReference type="GO" id="GO:0000976">
    <property type="term" value="F:transcription cis-regulatory region binding"/>
    <property type="evidence" value="ECO:0000353"/>
    <property type="project" value="CollecTF"/>
</dbReference>
<dbReference type="CDD" id="cd01392">
    <property type="entry name" value="HTH_LacI"/>
    <property type="match status" value="1"/>
</dbReference>
<dbReference type="CDD" id="cd06283">
    <property type="entry name" value="PBP1_RegR_EndR_KdgR-like"/>
    <property type="match status" value="1"/>
</dbReference>
<dbReference type="FunFam" id="1.10.260.40:FF:000039">
    <property type="entry name" value="LacI family transcriptional regulator"/>
    <property type="match status" value="1"/>
</dbReference>
<dbReference type="FunFam" id="3.40.50.2300:FF:000339">
    <property type="entry name" value="Transcriptional regulator PtxS"/>
    <property type="match status" value="1"/>
</dbReference>
<dbReference type="Gene3D" id="3.40.50.2300">
    <property type="match status" value="2"/>
</dbReference>
<dbReference type="Gene3D" id="1.10.260.40">
    <property type="entry name" value="lambda repressor-like DNA-binding domains"/>
    <property type="match status" value="1"/>
</dbReference>
<dbReference type="InterPro" id="IPR000843">
    <property type="entry name" value="HTH_LacI"/>
</dbReference>
<dbReference type="InterPro" id="IPR010982">
    <property type="entry name" value="Lambda_DNA-bd_dom_sf"/>
</dbReference>
<dbReference type="InterPro" id="IPR001761">
    <property type="entry name" value="Peripla_BP/Lac1_sug-bd_dom"/>
</dbReference>
<dbReference type="InterPro" id="IPR028082">
    <property type="entry name" value="Peripla_BP_I"/>
</dbReference>
<dbReference type="PANTHER" id="PTHR30146">
    <property type="entry name" value="LACI-RELATED TRANSCRIPTIONAL REPRESSOR"/>
    <property type="match status" value="1"/>
</dbReference>
<dbReference type="PANTHER" id="PTHR30146:SF145">
    <property type="entry name" value="RIBOSE OPERON REPRESSOR"/>
    <property type="match status" value="1"/>
</dbReference>
<dbReference type="Pfam" id="PF00356">
    <property type="entry name" value="LacI"/>
    <property type="match status" value="1"/>
</dbReference>
<dbReference type="Pfam" id="PF00532">
    <property type="entry name" value="Peripla_BP_1"/>
    <property type="match status" value="1"/>
</dbReference>
<dbReference type="SMART" id="SM00354">
    <property type="entry name" value="HTH_LACI"/>
    <property type="match status" value="1"/>
</dbReference>
<dbReference type="SUPFAM" id="SSF47413">
    <property type="entry name" value="lambda repressor-like DNA-binding domains"/>
    <property type="match status" value="1"/>
</dbReference>
<dbReference type="SUPFAM" id="SSF53822">
    <property type="entry name" value="Periplasmic binding protein-like I"/>
    <property type="match status" value="1"/>
</dbReference>
<dbReference type="PROSITE" id="PS00356">
    <property type="entry name" value="HTH_LACI_1"/>
    <property type="match status" value="1"/>
</dbReference>
<dbReference type="PROSITE" id="PS50932">
    <property type="entry name" value="HTH_LACI_2"/>
    <property type="match status" value="1"/>
</dbReference>
<organism>
    <name type="scientific">Pseudomonas putida (strain ATCC 47054 / DSM 6125 / CFBP 8728 / NCIMB 11950 / KT2440)</name>
    <dbReference type="NCBI Taxonomy" id="160488"/>
    <lineage>
        <taxon>Bacteria</taxon>
        <taxon>Pseudomonadati</taxon>
        <taxon>Pseudomonadota</taxon>
        <taxon>Gammaproteobacteria</taxon>
        <taxon>Pseudomonadales</taxon>
        <taxon>Pseudomonadaceae</taxon>
        <taxon>Pseudomonas</taxon>
    </lineage>
</organism>
<protein>
    <recommendedName>
        <fullName evidence="4">HTH-type transcriptional regulator PtxS</fullName>
    </recommendedName>
</protein>
<feature type="chain" id="PRO_0000456056" description="HTH-type transcriptional regulator PtxS">
    <location>
        <begin position="1"/>
        <end position="339"/>
    </location>
</feature>
<feature type="domain" description="HTH lacI-type" evidence="1">
    <location>
        <begin position="12"/>
        <end position="67"/>
    </location>
</feature>
<feature type="DNA-binding region" description="H-T-H motif" evidence="1">
    <location>
        <begin position="14"/>
        <end position="33"/>
    </location>
</feature>
<name>PTXS_PSEPK</name>
<reference key="1">
    <citation type="journal article" date="2002" name="Environ. Microbiol.">
        <title>Complete genome sequence and comparative analysis of the metabolically versatile Pseudomonas putida KT2440.</title>
        <authorList>
            <person name="Nelson K.E."/>
            <person name="Weinel C."/>
            <person name="Paulsen I.T."/>
            <person name="Dodson R.J."/>
            <person name="Hilbert H."/>
            <person name="Martins dos Santos V.A.P."/>
            <person name="Fouts D.E."/>
            <person name="Gill S.R."/>
            <person name="Pop M."/>
            <person name="Holmes M."/>
            <person name="Brinkac L.M."/>
            <person name="Beanan M.J."/>
            <person name="DeBoy R.T."/>
            <person name="Daugherty S.C."/>
            <person name="Kolonay J.F."/>
            <person name="Madupu R."/>
            <person name="Nelson W.C."/>
            <person name="White O."/>
            <person name="Peterson J.D."/>
            <person name="Khouri H.M."/>
            <person name="Hance I."/>
            <person name="Chris Lee P."/>
            <person name="Holtzapple E.K."/>
            <person name="Scanlan D."/>
            <person name="Tran K."/>
            <person name="Moazzez A."/>
            <person name="Utterback T.R."/>
            <person name="Rizzo M."/>
            <person name="Lee K."/>
            <person name="Kosack D."/>
            <person name="Moestl D."/>
            <person name="Wedler H."/>
            <person name="Lauber J."/>
            <person name="Stjepandic D."/>
            <person name="Hoheisel J."/>
            <person name="Straetz M."/>
            <person name="Heim S."/>
            <person name="Kiewitz C."/>
            <person name="Eisen J.A."/>
            <person name="Timmis K.N."/>
            <person name="Duesterhoeft A."/>
            <person name="Tuemmler B."/>
            <person name="Fraser C.M."/>
        </authorList>
    </citation>
    <scope>NUCLEOTIDE SEQUENCE [LARGE SCALE GENOMIC DNA]</scope>
    <source>
        <strain>ATCC 47054 / DSM 6125 / CFBP 8728 / NCIMB 11950 / KT2440</strain>
    </source>
</reference>
<reference key="2">
    <citation type="journal article" date="2010" name="J. Bacteriol.">
        <title>Compartmentalized glucose metabolism in Pseudomonas putida is controlled by the PtxS repressor.</title>
        <authorList>
            <person name="Daddaoua A."/>
            <person name="Krell T."/>
            <person name="Alfonso C."/>
            <person name="Morel B."/>
            <person name="Ramos J.L."/>
        </authorList>
    </citation>
    <scope>FUNCTION</scope>
    <scope>DNA-BINDING</scope>
    <scope>ACTIVITY REGULATION</scope>
    <scope>SUBUNIT</scope>
    <scope>TRANSCRIPTIONAL REGULATION</scope>
    <scope>DOMAIN</scope>
    <source>
        <strain>ATCC 47054 / DSM 6125 / CFBP 8728 / NCIMB 11950 / KT2440</strain>
    </source>
</reference>
<reference key="3">
    <citation type="journal article" date="2012" name="Acta Crystallogr. F">
        <title>In situ X-ray data collection from highly sensitive crystals of Pseudomonas putida PtxS in complex with DNA.</title>
        <authorList>
            <person name="Pineda-Molina E."/>
            <person name="Daddaoua A."/>
            <person name="Krell T."/>
            <person name="Ramos J.L."/>
            <person name="Garcia-Ruiz J.M."/>
            <person name="Gavira J.A."/>
        </authorList>
    </citation>
    <scope>CRYSTALLIZATION</scope>
</reference>
<keyword id="KW-0238">DNA-binding</keyword>
<keyword id="KW-1185">Reference proteome</keyword>
<keyword id="KW-0678">Repressor</keyword>
<keyword id="KW-0804">Transcription</keyword>
<keyword id="KW-0805">Transcription regulation</keyword>
<proteinExistence type="evidence at protein level"/>
<accession>Q88HH7</accession>
<evidence type="ECO:0000255" key="1">
    <source>
        <dbReference type="PROSITE-ProRule" id="PRU00111"/>
    </source>
</evidence>
<evidence type="ECO:0000269" key="2">
    <source>
    </source>
</evidence>
<evidence type="ECO:0000303" key="3">
    <source>
    </source>
</evidence>
<evidence type="ECO:0000305" key="4"/>
<evidence type="ECO:0000312" key="5">
    <source>
        <dbReference type="EMBL" id="AAN68984.1"/>
    </source>
</evidence>
<gene>
    <name evidence="3" type="primary">ptxS</name>
    <name evidence="5" type="ordered locus">PP_3380</name>
</gene>
<comment type="function">
    <text evidence="2">Negatively regulates glucose metabolism by binding directly to the promoter region of the kgu and gad operons (PubMed:20581202). It also negatively regulates its own synthesis (PubMed:20581202).</text>
</comment>
<comment type="activity regulation">
    <text evidence="2">2-ketogluconate acts as a molecular effector and causes dissociation of PtxS from its target promoter.</text>
</comment>
<comment type="subunit">
    <text evidence="2">Homodimer in solution.</text>
</comment>
<comment type="interaction">
    <interactant intactId="EBI-6411771">
        <id>Q88HH7</id>
    </interactant>
    <interactant intactId="EBI-6411771">
        <id>Q88HH7</id>
        <label>ptxS</label>
    </interactant>
    <organismsDiffer>false</organismsDiffer>
    <experiments>2</experiments>
</comment>
<comment type="induction">
    <text evidence="2">Negatively autoregulates its own synthesis by binding to a specific operator site within the ptxS upstream region.</text>
</comment>
<comment type="domain">
    <text evidence="2">Contains an N-terminal helix-turn-helix DNA-binding domain and a C-terminal domain that binds the effector.</text>
</comment>